<comment type="function">
    <text evidence="1">Catalyzes the reversible phosphorylation of UMP to UDP.</text>
</comment>
<comment type="catalytic activity">
    <reaction evidence="1">
        <text>UMP + ATP = UDP + ADP</text>
        <dbReference type="Rhea" id="RHEA:24400"/>
        <dbReference type="ChEBI" id="CHEBI:30616"/>
        <dbReference type="ChEBI" id="CHEBI:57865"/>
        <dbReference type="ChEBI" id="CHEBI:58223"/>
        <dbReference type="ChEBI" id="CHEBI:456216"/>
        <dbReference type="EC" id="2.7.4.22"/>
    </reaction>
</comment>
<comment type="activity regulation">
    <text evidence="1">Inhibited by UTP.</text>
</comment>
<comment type="pathway">
    <text evidence="1">Pyrimidine metabolism; CTP biosynthesis via de novo pathway; UDP from UMP (UMPK route): step 1/1.</text>
</comment>
<comment type="subunit">
    <text evidence="1">Homohexamer.</text>
</comment>
<comment type="subcellular location">
    <subcellularLocation>
        <location evidence="1">Cytoplasm</location>
    </subcellularLocation>
</comment>
<comment type="similarity">
    <text evidence="1">Belongs to the UMP kinase family.</text>
</comment>
<gene>
    <name evidence="1" type="primary">pyrH</name>
    <name type="ordered locus">Bxeno_A2733</name>
    <name type="ORF">Bxe_A1684</name>
</gene>
<name>PYRH_PARXL</name>
<evidence type="ECO:0000255" key="1">
    <source>
        <dbReference type="HAMAP-Rule" id="MF_01220"/>
    </source>
</evidence>
<reference key="1">
    <citation type="journal article" date="2006" name="Proc. Natl. Acad. Sci. U.S.A.">
        <title>Burkholderia xenovorans LB400 harbors a multi-replicon, 9.73-Mbp genome shaped for versatility.</title>
        <authorList>
            <person name="Chain P.S.G."/>
            <person name="Denef V.J."/>
            <person name="Konstantinidis K.T."/>
            <person name="Vergez L.M."/>
            <person name="Agullo L."/>
            <person name="Reyes V.L."/>
            <person name="Hauser L."/>
            <person name="Cordova M."/>
            <person name="Gomez L."/>
            <person name="Gonzalez M."/>
            <person name="Land M."/>
            <person name="Lao V."/>
            <person name="Larimer F."/>
            <person name="LiPuma J.J."/>
            <person name="Mahenthiralingam E."/>
            <person name="Malfatti S.A."/>
            <person name="Marx C.J."/>
            <person name="Parnell J.J."/>
            <person name="Ramette A."/>
            <person name="Richardson P."/>
            <person name="Seeger M."/>
            <person name="Smith D."/>
            <person name="Spilker T."/>
            <person name="Sul W.J."/>
            <person name="Tsoi T.V."/>
            <person name="Ulrich L.E."/>
            <person name="Zhulin I.B."/>
            <person name="Tiedje J.M."/>
        </authorList>
    </citation>
    <scope>NUCLEOTIDE SEQUENCE [LARGE SCALE GENOMIC DNA]</scope>
    <source>
        <strain>LB400</strain>
    </source>
</reference>
<organism>
    <name type="scientific">Paraburkholderia xenovorans (strain LB400)</name>
    <dbReference type="NCBI Taxonomy" id="266265"/>
    <lineage>
        <taxon>Bacteria</taxon>
        <taxon>Pseudomonadati</taxon>
        <taxon>Pseudomonadota</taxon>
        <taxon>Betaproteobacteria</taxon>
        <taxon>Burkholderiales</taxon>
        <taxon>Burkholderiaceae</taxon>
        <taxon>Paraburkholderia</taxon>
    </lineage>
</organism>
<sequence>MPTAYKRVLLKLSGEALMGDDAFGINRATIERMVADVAEVVRLGTQLAVVIGGGNIFRGVAGGAAGMDRATADYMGMLATMMNALALQDAMRHAGIEARVQSALRMDQVVEPYIRPRAIRQLEEGKVVIFAAGTGNPFFTTDTAAALRGSEIGAEVVLKATKVDGVYSADPKKDPSATRYTTISFDEAIGRNLQVMDATAFALCRDQKLPIRVFSIVKPGALKRIVQGEDEGTLVHV</sequence>
<accession>Q13XB8</accession>
<protein>
    <recommendedName>
        <fullName evidence="1">Uridylate kinase</fullName>
        <shortName evidence="1">UK</shortName>
        <ecNumber evidence="1">2.7.4.22</ecNumber>
    </recommendedName>
    <alternativeName>
        <fullName evidence="1">Uridine monophosphate kinase</fullName>
        <shortName evidence="1">UMP kinase</shortName>
        <shortName evidence="1">UMPK</shortName>
    </alternativeName>
</protein>
<proteinExistence type="inferred from homology"/>
<keyword id="KW-0067">ATP-binding</keyword>
<keyword id="KW-0963">Cytoplasm</keyword>
<keyword id="KW-0418">Kinase</keyword>
<keyword id="KW-0547">Nucleotide-binding</keyword>
<keyword id="KW-0665">Pyrimidine biosynthesis</keyword>
<keyword id="KW-1185">Reference proteome</keyword>
<keyword id="KW-0808">Transferase</keyword>
<feature type="chain" id="PRO_0000323819" description="Uridylate kinase">
    <location>
        <begin position="1"/>
        <end position="237"/>
    </location>
</feature>
<feature type="binding site" evidence="1">
    <location>
        <begin position="11"/>
        <end position="14"/>
    </location>
    <ligand>
        <name>ATP</name>
        <dbReference type="ChEBI" id="CHEBI:30616"/>
    </ligand>
</feature>
<feature type="binding site" evidence="1">
    <location>
        <position position="53"/>
    </location>
    <ligand>
        <name>UMP</name>
        <dbReference type="ChEBI" id="CHEBI:57865"/>
    </ligand>
</feature>
<feature type="binding site" evidence="1">
    <location>
        <position position="54"/>
    </location>
    <ligand>
        <name>ATP</name>
        <dbReference type="ChEBI" id="CHEBI:30616"/>
    </ligand>
</feature>
<feature type="binding site" evidence="1">
    <location>
        <position position="58"/>
    </location>
    <ligand>
        <name>ATP</name>
        <dbReference type="ChEBI" id="CHEBI:30616"/>
    </ligand>
</feature>
<feature type="binding site" evidence="1">
    <location>
        <position position="73"/>
    </location>
    <ligand>
        <name>UMP</name>
        <dbReference type="ChEBI" id="CHEBI:57865"/>
    </ligand>
</feature>
<feature type="binding site" evidence="1">
    <location>
        <begin position="134"/>
        <end position="141"/>
    </location>
    <ligand>
        <name>UMP</name>
        <dbReference type="ChEBI" id="CHEBI:57865"/>
    </ligand>
</feature>
<feature type="binding site" evidence="1">
    <location>
        <position position="161"/>
    </location>
    <ligand>
        <name>ATP</name>
        <dbReference type="ChEBI" id="CHEBI:30616"/>
    </ligand>
</feature>
<feature type="binding site" evidence="1">
    <location>
        <position position="167"/>
    </location>
    <ligand>
        <name>ATP</name>
        <dbReference type="ChEBI" id="CHEBI:30616"/>
    </ligand>
</feature>
<feature type="binding site" evidence="1">
    <location>
        <position position="170"/>
    </location>
    <ligand>
        <name>ATP</name>
        <dbReference type="ChEBI" id="CHEBI:30616"/>
    </ligand>
</feature>
<dbReference type="EC" id="2.7.4.22" evidence="1"/>
<dbReference type="EMBL" id="CP000270">
    <property type="protein sequence ID" value="ABE31271.1"/>
    <property type="molecule type" value="Genomic_DNA"/>
</dbReference>
<dbReference type="RefSeq" id="WP_011488865.1">
    <property type="nucleotide sequence ID" value="NZ_CP008760.1"/>
</dbReference>
<dbReference type="SMR" id="Q13XB8"/>
<dbReference type="STRING" id="266265.Bxe_A1684"/>
<dbReference type="GeneID" id="97055659"/>
<dbReference type="KEGG" id="bxb:DR64_3849"/>
<dbReference type="KEGG" id="bxe:Bxe_A1684"/>
<dbReference type="PATRIC" id="fig|266265.5.peg.2864"/>
<dbReference type="eggNOG" id="COG0528">
    <property type="taxonomic scope" value="Bacteria"/>
</dbReference>
<dbReference type="OrthoDB" id="9807458at2"/>
<dbReference type="UniPathway" id="UPA00159">
    <property type="reaction ID" value="UER00275"/>
</dbReference>
<dbReference type="Proteomes" id="UP000001817">
    <property type="component" value="Chromosome 1"/>
</dbReference>
<dbReference type="GO" id="GO:0005829">
    <property type="term" value="C:cytosol"/>
    <property type="evidence" value="ECO:0007669"/>
    <property type="project" value="TreeGrafter"/>
</dbReference>
<dbReference type="GO" id="GO:0005524">
    <property type="term" value="F:ATP binding"/>
    <property type="evidence" value="ECO:0007669"/>
    <property type="project" value="UniProtKB-KW"/>
</dbReference>
<dbReference type="GO" id="GO:0033862">
    <property type="term" value="F:UMP kinase activity"/>
    <property type="evidence" value="ECO:0007669"/>
    <property type="project" value="UniProtKB-EC"/>
</dbReference>
<dbReference type="GO" id="GO:0044210">
    <property type="term" value="P:'de novo' CTP biosynthetic process"/>
    <property type="evidence" value="ECO:0007669"/>
    <property type="project" value="UniProtKB-UniRule"/>
</dbReference>
<dbReference type="GO" id="GO:0006225">
    <property type="term" value="P:UDP biosynthetic process"/>
    <property type="evidence" value="ECO:0007669"/>
    <property type="project" value="TreeGrafter"/>
</dbReference>
<dbReference type="CDD" id="cd04254">
    <property type="entry name" value="AAK_UMPK-PyrH-Ec"/>
    <property type="match status" value="1"/>
</dbReference>
<dbReference type="FunFam" id="3.40.1160.10:FF:000001">
    <property type="entry name" value="Uridylate kinase"/>
    <property type="match status" value="1"/>
</dbReference>
<dbReference type="Gene3D" id="3.40.1160.10">
    <property type="entry name" value="Acetylglutamate kinase-like"/>
    <property type="match status" value="1"/>
</dbReference>
<dbReference type="HAMAP" id="MF_01220_B">
    <property type="entry name" value="PyrH_B"/>
    <property type="match status" value="1"/>
</dbReference>
<dbReference type="InterPro" id="IPR036393">
    <property type="entry name" value="AceGlu_kinase-like_sf"/>
</dbReference>
<dbReference type="InterPro" id="IPR001048">
    <property type="entry name" value="Asp/Glu/Uridylate_kinase"/>
</dbReference>
<dbReference type="InterPro" id="IPR011817">
    <property type="entry name" value="Uridylate_kinase"/>
</dbReference>
<dbReference type="InterPro" id="IPR015963">
    <property type="entry name" value="Uridylate_kinase_bac"/>
</dbReference>
<dbReference type="NCBIfam" id="TIGR02075">
    <property type="entry name" value="pyrH_bact"/>
    <property type="match status" value="1"/>
</dbReference>
<dbReference type="PANTHER" id="PTHR42833">
    <property type="entry name" value="URIDYLATE KINASE"/>
    <property type="match status" value="1"/>
</dbReference>
<dbReference type="PANTHER" id="PTHR42833:SF4">
    <property type="entry name" value="URIDYLATE KINASE PUMPKIN, CHLOROPLASTIC"/>
    <property type="match status" value="1"/>
</dbReference>
<dbReference type="Pfam" id="PF00696">
    <property type="entry name" value="AA_kinase"/>
    <property type="match status" value="1"/>
</dbReference>
<dbReference type="PIRSF" id="PIRSF005650">
    <property type="entry name" value="Uridylate_kin"/>
    <property type="match status" value="1"/>
</dbReference>
<dbReference type="SUPFAM" id="SSF53633">
    <property type="entry name" value="Carbamate kinase-like"/>
    <property type="match status" value="1"/>
</dbReference>